<gene>
    <name evidence="1" type="primary">aroC</name>
    <name type="ordered locus">DVU_0894</name>
</gene>
<keyword id="KW-0028">Amino-acid biosynthesis</keyword>
<keyword id="KW-0057">Aromatic amino acid biosynthesis</keyword>
<keyword id="KW-0274">FAD</keyword>
<keyword id="KW-0285">Flavoprotein</keyword>
<keyword id="KW-0288">FMN</keyword>
<keyword id="KW-0456">Lyase</keyword>
<keyword id="KW-0521">NADP</keyword>
<keyword id="KW-1185">Reference proteome</keyword>
<accession>Q72DN5</accession>
<proteinExistence type="inferred from homology"/>
<comment type="function">
    <text evidence="1">Catalyzes the anti-1,4-elimination of the C-3 phosphate and the C-6 proR hydrogen from 5-enolpyruvylshikimate-3-phosphate (EPSP) to yield chorismate, which is the branch point compound that serves as the starting substrate for the three terminal pathways of aromatic amino acid biosynthesis. This reaction introduces a second double bond into the aromatic ring system.</text>
</comment>
<comment type="catalytic activity">
    <reaction evidence="1">
        <text>5-O-(1-carboxyvinyl)-3-phosphoshikimate = chorismate + phosphate</text>
        <dbReference type="Rhea" id="RHEA:21020"/>
        <dbReference type="ChEBI" id="CHEBI:29748"/>
        <dbReference type="ChEBI" id="CHEBI:43474"/>
        <dbReference type="ChEBI" id="CHEBI:57701"/>
        <dbReference type="EC" id="4.2.3.5"/>
    </reaction>
</comment>
<comment type="cofactor">
    <cofactor evidence="1">
        <name>FMNH2</name>
        <dbReference type="ChEBI" id="CHEBI:57618"/>
    </cofactor>
    <text evidence="1">Reduced FMN (FMNH(2)).</text>
</comment>
<comment type="pathway">
    <text evidence="1">Metabolic intermediate biosynthesis; chorismate biosynthesis; chorismate from D-erythrose 4-phosphate and phosphoenolpyruvate: step 7/7.</text>
</comment>
<comment type="subunit">
    <text evidence="1">Homotetramer.</text>
</comment>
<comment type="similarity">
    <text evidence="1">Belongs to the chorismate synthase family.</text>
</comment>
<sequence>MSGNTLGRLFRLTTYGESHGAGLGGVIDGCPAGIALDEAVIQRELDLRRPGGNSASTTRQEPDRVRLLSGVFEGVTTGTPIAFHVENVDQRSRDYGEIARLYRPGHADFTYDAKFGVRDYRGGGRASGRETLSRVAGGAIAQALLARHGIAVRAFTVELGGVPADLVDVAGAQQRPFFSPDPDVVEAWEDMVRTVKGEGDTLGGIVQVEATGVPAGLGEPVFDKLDAVLAYALMSVGAVKGVEVGAGFEAARMHGSDNNDPIVPSGFFTNHAGGILGGISNGETIVLRAAVKPIPSIAQEQITIDRDGKPSALFIAGRHDISAIPRIVPVLKAMTALVLADMLLMQRRMATPQP</sequence>
<reference key="1">
    <citation type="journal article" date="2004" name="Nat. Biotechnol.">
        <title>The genome sequence of the anaerobic, sulfate-reducing bacterium Desulfovibrio vulgaris Hildenborough.</title>
        <authorList>
            <person name="Heidelberg J.F."/>
            <person name="Seshadri R."/>
            <person name="Haveman S.A."/>
            <person name="Hemme C.L."/>
            <person name="Paulsen I.T."/>
            <person name="Kolonay J.F."/>
            <person name="Eisen J.A."/>
            <person name="Ward N.L."/>
            <person name="Methe B.A."/>
            <person name="Brinkac L.M."/>
            <person name="Daugherty S.C."/>
            <person name="DeBoy R.T."/>
            <person name="Dodson R.J."/>
            <person name="Durkin A.S."/>
            <person name="Madupu R."/>
            <person name="Nelson W.C."/>
            <person name="Sullivan S.A."/>
            <person name="Fouts D.E."/>
            <person name="Haft D.H."/>
            <person name="Selengut J."/>
            <person name="Peterson J.D."/>
            <person name="Davidsen T.M."/>
            <person name="Zafar N."/>
            <person name="Zhou L."/>
            <person name="Radune D."/>
            <person name="Dimitrov G."/>
            <person name="Hance M."/>
            <person name="Tran K."/>
            <person name="Khouri H.M."/>
            <person name="Gill J."/>
            <person name="Utterback T.R."/>
            <person name="Feldblyum T.V."/>
            <person name="Wall J.D."/>
            <person name="Voordouw G."/>
            <person name="Fraser C.M."/>
        </authorList>
    </citation>
    <scope>NUCLEOTIDE SEQUENCE [LARGE SCALE GENOMIC DNA]</scope>
    <source>
        <strain>ATCC 29579 / DSM 644 / CCUG 34227 / NCIMB 8303 / VKM B-1760 / Hildenborough</strain>
    </source>
</reference>
<name>AROC_NITV2</name>
<feature type="chain" id="PRO_0000140583" description="Chorismate synthase">
    <location>
        <begin position="1"/>
        <end position="354"/>
    </location>
</feature>
<feature type="binding site" evidence="1">
    <location>
        <position position="48"/>
    </location>
    <ligand>
        <name>NADP(+)</name>
        <dbReference type="ChEBI" id="CHEBI:58349"/>
    </ligand>
</feature>
<feature type="binding site" evidence="1">
    <location>
        <begin position="125"/>
        <end position="127"/>
    </location>
    <ligand>
        <name>FMN</name>
        <dbReference type="ChEBI" id="CHEBI:58210"/>
    </ligand>
</feature>
<feature type="binding site" evidence="1">
    <location>
        <position position="277"/>
    </location>
    <ligand>
        <name>FMN</name>
        <dbReference type="ChEBI" id="CHEBI:58210"/>
    </ligand>
</feature>
<feature type="binding site" evidence="1">
    <location>
        <begin position="292"/>
        <end position="296"/>
    </location>
    <ligand>
        <name>FMN</name>
        <dbReference type="ChEBI" id="CHEBI:58210"/>
    </ligand>
</feature>
<feature type="binding site" evidence="1">
    <location>
        <position position="318"/>
    </location>
    <ligand>
        <name>FMN</name>
        <dbReference type="ChEBI" id="CHEBI:58210"/>
    </ligand>
</feature>
<dbReference type="EC" id="4.2.3.5" evidence="1"/>
<dbReference type="EMBL" id="AE017285">
    <property type="protein sequence ID" value="AAS95374.1"/>
    <property type="molecule type" value="Genomic_DNA"/>
</dbReference>
<dbReference type="RefSeq" id="WP_010938193.1">
    <property type="nucleotide sequence ID" value="NC_002937.3"/>
</dbReference>
<dbReference type="RefSeq" id="YP_010115.1">
    <property type="nucleotide sequence ID" value="NC_002937.3"/>
</dbReference>
<dbReference type="SMR" id="Q72DN5"/>
<dbReference type="IntAct" id="Q72DN5">
    <property type="interactions" value="1"/>
</dbReference>
<dbReference type="STRING" id="882.DVU_0894"/>
<dbReference type="PaxDb" id="882-DVU_0894"/>
<dbReference type="EnsemblBacteria" id="AAS95374">
    <property type="protein sequence ID" value="AAS95374"/>
    <property type="gene ID" value="DVU_0894"/>
</dbReference>
<dbReference type="KEGG" id="dvu:DVU_0894"/>
<dbReference type="PATRIC" id="fig|882.5.peg.838"/>
<dbReference type="eggNOG" id="COG0082">
    <property type="taxonomic scope" value="Bacteria"/>
</dbReference>
<dbReference type="HOGENOM" id="CLU_034547_0_0_7"/>
<dbReference type="OrthoDB" id="9771806at2"/>
<dbReference type="PhylomeDB" id="Q72DN5"/>
<dbReference type="UniPathway" id="UPA00053">
    <property type="reaction ID" value="UER00090"/>
</dbReference>
<dbReference type="Proteomes" id="UP000002194">
    <property type="component" value="Chromosome"/>
</dbReference>
<dbReference type="GO" id="GO:0005829">
    <property type="term" value="C:cytosol"/>
    <property type="evidence" value="ECO:0007669"/>
    <property type="project" value="TreeGrafter"/>
</dbReference>
<dbReference type="GO" id="GO:0004107">
    <property type="term" value="F:chorismate synthase activity"/>
    <property type="evidence" value="ECO:0007669"/>
    <property type="project" value="UniProtKB-UniRule"/>
</dbReference>
<dbReference type="GO" id="GO:0010181">
    <property type="term" value="F:FMN binding"/>
    <property type="evidence" value="ECO:0007669"/>
    <property type="project" value="TreeGrafter"/>
</dbReference>
<dbReference type="GO" id="GO:0008652">
    <property type="term" value="P:amino acid biosynthetic process"/>
    <property type="evidence" value="ECO:0007669"/>
    <property type="project" value="UniProtKB-KW"/>
</dbReference>
<dbReference type="GO" id="GO:0009073">
    <property type="term" value="P:aromatic amino acid family biosynthetic process"/>
    <property type="evidence" value="ECO:0007669"/>
    <property type="project" value="UniProtKB-KW"/>
</dbReference>
<dbReference type="GO" id="GO:0009423">
    <property type="term" value="P:chorismate biosynthetic process"/>
    <property type="evidence" value="ECO:0007669"/>
    <property type="project" value="UniProtKB-UniRule"/>
</dbReference>
<dbReference type="CDD" id="cd07304">
    <property type="entry name" value="Chorismate_synthase"/>
    <property type="match status" value="1"/>
</dbReference>
<dbReference type="Gene3D" id="3.60.150.10">
    <property type="entry name" value="Chorismate synthase AroC"/>
    <property type="match status" value="1"/>
</dbReference>
<dbReference type="HAMAP" id="MF_00300">
    <property type="entry name" value="Chorismate_synth"/>
    <property type="match status" value="1"/>
</dbReference>
<dbReference type="InterPro" id="IPR000453">
    <property type="entry name" value="Chorismate_synth"/>
</dbReference>
<dbReference type="InterPro" id="IPR035904">
    <property type="entry name" value="Chorismate_synth_AroC_sf"/>
</dbReference>
<dbReference type="InterPro" id="IPR020541">
    <property type="entry name" value="Chorismate_synthase_CS"/>
</dbReference>
<dbReference type="NCBIfam" id="TIGR00033">
    <property type="entry name" value="aroC"/>
    <property type="match status" value="1"/>
</dbReference>
<dbReference type="NCBIfam" id="NF003793">
    <property type="entry name" value="PRK05382.1"/>
    <property type="match status" value="1"/>
</dbReference>
<dbReference type="PANTHER" id="PTHR21085">
    <property type="entry name" value="CHORISMATE SYNTHASE"/>
    <property type="match status" value="1"/>
</dbReference>
<dbReference type="PANTHER" id="PTHR21085:SF0">
    <property type="entry name" value="CHORISMATE SYNTHASE"/>
    <property type="match status" value="1"/>
</dbReference>
<dbReference type="Pfam" id="PF01264">
    <property type="entry name" value="Chorismate_synt"/>
    <property type="match status" value="1"/>
</dbReference>
<dbReference type="PIRSF" id="PIRSF001456">
    <property type="entry name" value="Chorismate_synth"/>
    <property type="match status" value="1"/>
</dbReference>
<dbReference type="SUPFAM" id="SSF103263">
    <property type="entry name" value="Chorismate synthase, AroC"/>
    <property type="match status" value="1"/>
</dbReference>
<dbReference type="PROSITE" id="PS00787">
    <property type="entry name" value="CHORISMATE_SYNTHASE_1"/>
    <property type="match status" value="1"/>
</dbReference>
<dbReference type="PROSITE" id="PS00788">
    <property type="entry name" value="CHORISMATE_SYNTHASE_2"/>
    <property type="match status" value="1"/>
</dbReference>
<protein>
    <recommendedName>
        <fullName evidence="1">Chorismate synthase</fullName>
        <shortName evidence="1">CS</shortName>
        <ecNumber evidence="1">4.2.3.5</ecNumber>
    </recommendedName>
    <alternativeName>
        <fullName evidence="1">5-enolpyruvylshikimate-3-phosphate phospholyase</fullName>
    </alternativeName>
</protein>
<organism>
    <name type="scientific">Nitratidesulfovibrio vulgaris (strain ATCC 29579 / DSM 644 / CCUG 34227 / NCIMB 8303 / VKM B-1760 / Hildenborough)</name>
    <name type="common">Desulfovibrio vulgaris</name>
    <dbReference type="NCBI Taxonomy" id="882"/>
    <lineage>
        <taxon>Bacteria</taxon>
        <taxon>Pseudomonadati</taxon>
        <taxon>Thermodesulfobacteriota</taxon>
        <taxon>Desulfovibrionia</taxon>
        <taxon>Desulfovibrionales</taxon>
        <taxon>Desulfovibrionaceae</taxon>
        <taxon>Nitratidesulfovibrio</taxon>
    </lineage>
</organism>
<evidence type="ECO:0000255" key="1">
    <source>
        <dbReference type="HAMAP-Rule" id="MF_00300"/>
    </source>
</evidence>